<reference key="1">
    <citation type="journal article" date="2002" name="Nature">
        <title>The genome sequence of Schizosaccharomyces pombe.</title>
        <authorList>
            <person name="Wood V."/>
            <person name="Gwilliam R."/>
            <person name="Rajandream M.A."/>
            <person name="Lyne M.H."/>
            <person name="Lyne R."/>
            <person name="Stewart A."/>
            <person name="Sgouros J.G."/>
            <person name="Peat N."/>
            <person name="Hayles J."/>
            <person name="Baker S.G."/>
            <person name="Basham D."/>
            <person name="Bowman S."/>
            <person name="Brooks K."/>
            <person name="Brown D."/>
            <person name="Brown S."/>
            <person name="Chillingworth T."/>
            <person name="Churcher C.M."/>
            <person name="Collins M."/>
            <person name="Connor R."/>
            <person name="Cronin A."/>
            <person name="Davis P."/>
            <person name="Feltwell T."/>
            <person name="Fraser A."/>
            <person name="Gentles S."/>
            <person name="Goble A."/>
            <person name="Hamlin N."/>
            <person name="Harris D.E."/>
            <person name="Hidalgo J."/>
            <person name="Hodgson G."/>
            <person name="Holroyd S."/>
            <person name="Hornsby T."/>
            <person name="Howarth S."/>
            <person name="Huckle E.J."/>
            <person name="Hunt S."/>
            <person name="Jagels K."/>
            <person name="James K.D."/>
            <person name="Jones L."/>
            <person name="Jones M."/>
            <person name="Leather S."/>
            <person name="McDonald S."/>
            <person name="McLean J."/>
            <person name="Mooney P."/>
            <person name="Moule S."/>
            <person name="Mungall K.L."/>
            <person name="Murphy L.D."/>
            <person name="Niblett D."/>
            <person name="Odell C."/>
            <person name="Oliver K."/>
            <person name="O'Neil S."/>
            <person name="Pearson D."/>
            <person name="Quail M.A."/>
            <person name="Rabbinowitsch E."/>
            <person name="Rutherford K.M."/>
            <person name="Rutter S."/>
            <person name="Saunders D."/>
            <person name="Seeger K."/>
            <person name="Sharp S."/>
            <person name="Skelton J."/>
            <person name="Simmonds M.N."/>
            <person name="Squares R."/>
            <person name="Squares S."/>
            <person name="Stevens K."/>
            <person name="Taylor K."/>
            <person name="Taylor R.G."/>
            <person name="Tivey A."/>
            <person name="Walsh S.V."/>
            <person name="Warren T."/>
            <person name="Whitehead S."/>
            <person name="Woodward J.R."/>
            <person name="Volckaert G."/>
            <person name="Aert R."/>
            <person name="Robben J."/>
            <person name="Grymonprez B."/>
            <person name="Weltjens I."/>
            <person name="Vanstreels E."/>
            <person name="Rieger M."/>
            <person name="Schaefer M."/>
            <person name="Mueller-Auer S."/>
            <person name="Gabel C."/>
            <person name="Fuchs M."/>
            <person name="Duesterhoeft A."/>
            <person name="Fritzc C."/>
            <person name="Holzer E."/>
            <person name="Moestl D."/>
            <person name="Hilbert H."/>
            <person name="Borzym K."/>
            <person name="Langer I."/>
            <person name="Beck A."/>
            <person name="Lehrach H."/>
            <person name="Reinhardt R."/>
            <person name="Pohl T.M."/>
            <person name="Eger P."/>
            <person name="Zimmermann W."/>
            <person name="Wedler H."/>
            <person name="Wambutt R."/>
            <person name="Purnelle B."/>
            <person name="Goffeau A."/>
            <person name="Cadieu E."/>
            <person name="Dreano S."/>
            <person name="Gloux S."/>
            <person name="Lelaure V."/>
            <person name="Mottier S."/>
            <person name="Galibert F."/>
            <person name="Aves S.J."/>
            <person name="Xiang Z."/>
            <person name="Hunt C."/>
            <person name="Moore K."/>
            <person name="Hurst S.M."/>
            <person name="Lucas M."/>
            <person name="Rochet M."/>
            <person name="Gaillardin C."/>
            <person name="Tallada V.A."/>
            <person name="Garzon A."/>
            <person name="Thode G."/>
            <person name="Daga R.R."/>
            <person name="Cruzado L."/>
            <person name="Jimenez J."/>
            <person name="Sanchez M."/>
            <person name="del Rey F."/>
            <person name="Benito J."/>
            <person name="Dominguez A."/>
            <person name="Revuelta J.L."/>
            <person name="Moreno S."/>
            <person name="Armstrong J."/>
            <person name="Forsburg S.L."/>
            <person name="Cerutti L."/>
            <person name="Lowe T."/>
            <person name="McCombie W.R."/>
            <person name="Paulsen I."/>
            <person name="Potashkin J."/>
            <person name="Shpakovski G.V."/>
            <person name="Ussery D."/>
            <person name="Barrell B.G."/>
            <person name="Nurse P."/>
        </authorList>
    </citation>
    <scope>NUCLEOTIDE SEQUENCE [LARGE SCALE GENOMIC DNA]</scope>
    <source>
        <strain>972 / ATCC 24843</strain>
    </source>
</reference>
<reference key="2">
    <citation type="submission" date="1997-04" db="EMBL/GenBank/DDBJ databases">
        <authorList>
            <person name="Jang Y.-J."/>
            <person name="Yoo H.-S."/>
        </authorList>
    </citation>
    <scope>NUCLEOTIDE SEQUENCE [MRNA] OF 1-58</scope>
    <source>
        <strain>972 / ATCC 24843</strain>
    </source>
</reference>
<reference key="3">
    <citation type="journal article" date="2003" name="J. Biol. Chem.">
        <title>Rpn5 is a conserved proteasome subunit and required for proper proteasome localization and assembly.</title>
        <authorList>
            <person name="Yen H.-C.S."/>
            <person name="Espiritu C."/>
            <person name="Chang E.C."/>
        </authorList>
    </citation>
    <scope>FUNCTION</scope>
    <scope>SUBCELLULAR LOCATION</scope>
    <source>
        <strain>SP870</strain>
    </source>
</reference>
<reference key="4">
    <citation type="journal article" date="2008" name="J. Proteome Res.">
        <title>Phosphoproteome analysis of fission yeast.</title>
        <authorList>
            <person name="Wilson-Grady J.T."/>
            <person name="Villen J."/>
            <person name="Gygi S.P."/>
        </authorList>
    </citation>
    <scope>PHOSPHORYLATION [LARGE SCALE ANALYSIS] AT SER-209</scope>
    <scope>IDENTIFICATION BY MASS SPECTROMETRY</scope>
</reference>
<organism>
    <name type="scientific">Schizosaccharomyces pombe (strain 972 / ATCC 24843)</name>
    <name type="common">Fission yeast</name>
    <dbReference type="NCBI Taxonomy" id="284812"/>
    <lineage>
        <taxon>Eukaryota</taxon>
        <taxon>Fungi</taxon>
        <taxon>Dikarya</taxon>
        <taxon>Ascomycota</taxon>
        <taxon>Taphrinomycotina</taxon>
        <taxon>Schizosaccharomycetes</taxon>
        <taxon>Schizosaccharomycetales</taxon>
        <taxon>Schizosaccharomycetaceae</taxon>
        <taxon>Schizosaccharomyces</taxon>
    </lineage>
</organism>
<proteinExistence type="evidence at protein level"/>
<evidence type="ECO:0000255" key="1">
    <source>
        <dbReference type="PROSITE-ProRule" id="PRU01185"/>
    </source>
</evidence>
<evidence type="ECO:0000269" key="2">
    <source>
    </source>
</evidence>
<evidence type="ECO:0000269" key="3">
    <source>
    </source>
</evidence>
<evidence type="ECO:0000305" key="4"/>
<name>RPN51_SCHPO</name>
<comment type="function">
    <text evidence="2">Acts as a regulatory subunit of the 26S proteasome which is involved in the ATP-dependent degradation of ubiquitinated proteins. Required for proper proteasome assembly.</text>
</comment>
<comment type="subcellular location">
    <subcellularLocation>
        <location evidence="2">Nucleus</location>
    </subcellularLocation>
</comment>
<comment type="similarity">
    <text evidence="4">Belongs to the proteasome subunit p55 family.</text>
</comment>
<comment type="sequence caution" evidence="4">
    <conflict type="erroneous initiation">
        <sequence resource="EMBL-CDS" id="AAB63869"/>
    </conflict>
    <text>Extended N-terminus.</text>
</comment>
<sequence>MEQKPEVDYSEKFAELQKSLNNLNTIDIDANLEKLLIFEKQVRQASDTSTNTKVLIYIADLLFRAGDFQGLNEQLVSLFKKHGQLKQSMTSLVQHVMTYLPGIDDLKTKINLIETLRTITDGKIYVEVERARLTQLLSQIKEEQGDIKSAQEILCNEPVETYGSFDLKEKVAFILDQVRLFLLRSDYYMASTYTKKINVKFFEKEDVQSLKLKYYEQKIRIGLHDDAYLDVCKYYRAVYDTAVVQEDPEKWKEILENVVCFALLTPYDNEQADLLHRINADHKLNSLPLLQQLVKCFIVNELMRWPKIAEIYGSALRSNPVFAENDEKGEKRWSELRKRVIEHNIRVVANYYSRIHCSRLGVLLDMSPSETEQFLCDLIAKHHFYAKIDRPAQVISFKKSQNVQEQLNEWGSNITELLGKLEKVRQLIIKEEMMNSIQQAVAK</sequence>
<accession>P0CU17</accession>
<accession>O14381</accession>
<accession>Q9UTM3</accession>
<feature type="chain" id="PRO_0000173864" description="26S proteasome regulatory subunit rpn501">
    <location>
        <begin position="1"/>
        <end position="443"/>
    </location>
</feature>
<feature type="domain" description="PCI" evidence="1">
    <location>
        <begin position="230"/>
        <end position="402"/>
    </location>
</feature>
<feature type="modified residue" description="Phosphoserine" evidence="3">
    <location>
        <position position="209"/>
    </location>
</feature>
<feature type="sequence conflict" description="In Ref. 2; AAB63869." evidence="4" ref="2">
    <original>YI</original>
    <variation>SC</variation>
    <location>
        <begin position="57"/>
        <end position="58"/>
    </location>
</feature>
<keyword id="KW-0539">Nucleus</keyword>
<keyword id="KW-0597">Phosphoprotein</keyword>
<keyword id="KW-0647">Proteasome</keyword>
<keyword id="KW-1185">Reference proteome</keyword>
<gene>
    <name type="primary">rpn501</name>
    <name type="synonym">rpn5</name>
    <name type="synonym">rpn5a</name>
    <name type="ORF">SPAC1420.03</name>
</gene>
<protein>
    <recommendedName>
        <fullName>26S proteasome regulatory subunit rpn501</fullName>
    </recommendedName>
</protein>
<dbReference type="EMBL" id="CU329670">
    <property type="protein sequence ID" value="CAB57322.1"/>
    <property type="molecule type" value="Genomic_DNA"/>
</dbReference>
<dbReference type="EMBL" id="U97377">
    <property type="protein sequence ID" value="AAB63869.1"/>
    <property type="status" value="ALT_INIT"/>
    <property type="molecule type" value="mRNA"/>
</dbReference>
<dbReference type="PIR" id="T37666">
    <property type="entry name" value="T37666"/>
</dbReference>
<dbReference type="RefSeq" id="NP_593278.1">
    <property type="nucleotide sequence ID" value="NM_001018674.2"/>
</dbReference>
<dbReference type="RefSeq" id="NP_594776.1">
    <property type="nucleotide sequence ID" value="NM_001020204.2"/>
</dbReference>
<dbReference type="SMR" id="P0CU17"/>
<dbReference type="ComplexPortal" id="CPX-9077">
    <property type="entry name" value="26S proteasome complex"/>
</dbReference>
<dbReference type="FunCoup" id="P0CU17">
    <property type="interactions" value="788"/>
</dbReference>
<dbReference type="STRING" id="284812.P0CU17"/>
<dbReference type="iPTMnet" id="P0CU17"/>
<dbReference type="PaxDb" id="4896-SPAC1420.03.1"/>
<dbReference type="EnsemblFungi" id="SPAC1420.03.1">
    <property type="protein sequence ID" value="SPAC1420.03.1:pep"/>
    <property type="gene ID" value="SPAC1420.03"/>
</dbReference>
<dbReference type="EnsemblFungi" id="SPAPB8E5.02c.1">
    <property type="protein sequence ID" value="SPAPB8E5.02c.1:pep"/>
    <property type="gene ID" value="SPAPB8E5.02c"/>
</dbReference>
<dbReference type="GeneID" id="2542907"/>
<dbReference type="GeneID" id="2543347"/>
<dbReference type="KEGG" id="spo:2542907"/>
<dbReference type="KEGG" id="spo:2543347"/>
<dbReference type="PomBase" id="SPAC1420.03">
    <property type="gene designation" value="rpn501"/>
</dbReference>
<dbReference type="VEuPathDB" id="FungiDB:SPAC1420.03"/>
<dbReference type="VEuPathDB" id="FungiDB:SPAPB8E5.02c"/>
<dbReference type="eggNOG" id="KOG1498">
    <property type="taxonomic scope" value="Eukaryota"/>
</dbReference>
<dbReference type="InParanoid" id="P0CU17"/>
<dbReference type="OMA" id="AENEMFK"/>
<dbReference type="PhylomeDB" id="P0CU17"/>
<dbReference type="Reactome" id="R-SPO-1236978">
    <property type="pathway name" value="Cross-presentation of soluble exogenous antigens (endosomes)"/>
</dbReference>
<dbReference type="Reactome" id="R-SPO-350562">
    <property type="pathway name" value="Regulation of ornithine decarboxylase (ODC)"/>
</dbReference>
<dbReference type="Reactome" id="R-SPO-5687128">
    <property type="pathway name" value="MAPK6/MAPK4 signaling"/>
</dbReference>
<dbReference type="Reactome" id="R-SPO-5689603">
    <property type="pathway name" value="UCH proteinases"/>
</dbReference>
<dbReference type="Reactome" id="R-SPO-5689880">
    <property type="pathway name" value="Ub-specific processing proteases"/>
</dbReference>
<dbReference type="Reactome" id="R-SPO-6798695">
    <property type="pathway name" value="Neutrophil degranulation"/>
</dbReference>
<dbReference type="Reactome" id="R-SPO-68949">
    <property type="pathway name" value="Orc1 removal from chromatin"/>
</dbReference>
<dbReference type="Reactome" id="R-SPO-69017">
    <property type="pathway name" value="CDK-mediated phosphorylation and removal of Cdc6"/>
</dbReference>
<dbReference type="Reactome" id="R-SPO-69601">
    <property type="pathway name" value="Ubiquitin Mediated Degradation of Phosphorylated Cdc25A"/>
</dbReference>
<dbReference type="Reactome" id="R-SPO-75815">
    <property type="pathway name" value="Ubiquitin-dependent degradation of Cyclin D"/>
</dbReference>
<dbReference type="Reactome" id="R-SPO-8854050">
    <property type="pathway name" value="FBXL7 down-regulates AURKA during mitotic entry and in early mitosis"/>
</dbReference>
<dbReference type="Reactome" id="R-SPO-8948751">
    <property type="pathway name" value="Regulation of PTEN stability and activity"/>
</dbReference>
<dbReference type="Reactome" id="R-SPO-8951664">
    <property type="pathway name" value="Neddylation"/>
</dbReference>
<dbReference type="Reactome" id="R-SPO-9755511">
    <property type="pathway name" value="KEAP1-NFE2L2 pathway"/>
</dbReference>
<dbReference type="Reactome" id="R-SPO-983168">
    <property type="pathway name" value="Antigen processing: Ubiquitination &amp; Proteasome degradation"/>
</dbReference>
<dbReference type="Reactome" id="R-SPO-9907900">
    <property type="pathway name" value="Proteasome assembly"/>
</dbReference>
<dbReference type="PRO" id="PR:P0CU17"/>
<dbReference type="Proteomes" id="UP000002485">
    <property type="component" value="Chromosome I"/>
</dbReference>
<dbReference type="GO" id="GO:0005737">
    <property type="term" value="C:cytoplasm"/>
    <property type="evidence" value="ECO:0000318"/>
    <property type="project" value="GO_Central"/>
</dbReference>
<dbReference type="GO" id="GO:0005829">
    <property type="term" value="C:cytosol"/>
    <property type="evidence" value="ECO:0007005"/>
    <property type="project" value="PomBase"/>
</dbReference>
<dbReference type="GO" id="GO:0005635">
    <property type="term" value="C:nuclear envelope"/>
    <property type="evidence" value="ECO:0007005"/>
    <property type="project" value="PomBase"/>
</dbReference>
<dbReference type="GO" id="GO:0034399">
    <property type="term" value="C:nuclear periphery"/>
    <property type="evidence" value="ECO:0000314"/>
    <property type="project" value="PomBase"/>
</dbReference>
<dbReference type="GO" id="GO:0005634">
    <property type="term" value="C:nucleus"/>
    <property type="evidence" value="ECO:0000314"/>
    <property type="project" value="PomBase"/>
</dbReference>
<dbReference type="GO" id="GO:0000502">
    <property type="term" value="C:proteasome complex"/>
    <property type="evidence" value="ECO:0000314"/>
    <property type="project" value="PomBase"/>
</dbReference>
<dbReference type="GO" id="GO:0008541">
    <property type="term" value="C:proteasome regulatory particle, lid subcomplex"/>
    <property type="evidence" value="ECO:0000314"/>
    <property type="project" value="PomBase"/>
</dbReference>
<dbReference type="GO" id="GO:0043161">
    <property type="term" value="P:proteasome-mediated ubiquitin-dependent protein catabolic process"/>
    <property type="evidence" value="ECO:0000266"/>
    <property type="project" value="PomBase"/>
</dbReference>
<dbReference type="FunFam" id="1.10.10.10:FF:000070">
    <property type="entry name" value="26S proteasome non-ATPase regulatory subunit 12"/>
    <property type="match status" value="1"/>
</dbReference>
<dbReference type="Gene3D" id="1.10.10.10">
    <property type="entry name" value="Winged helix-like DNA-binding domain superfamily/Winged helix DNA-binding domain"/>
    <property type="match status" value="1"/>
</dbReference>
<dbReference type="InterPro" id="IPR000717">
    <property type="entry name" value="PCI_dom"/>
</dbReference>
<dbReference type="InterPro" id="IPR054559">
    <property type="entry name" value="PSMD12-CSN4-like_N"/>
</dbReference>
<dbReference type="InterPro" id="IPR040134">
    <property type="entry name" value="PSMD12/CSN4"/>
</dbReference>
<dbReference type="InterPro" id="IPR040896">
    <property type="entry name" value="RPN5_C"/>
</dbReference>
<dbReference type="InterPro" id="IPR036388">
    <property type="entry name" value="WH-like_DNA-bd_sf"/>
</dbReference>
<dbReference type="InterPro" id="IPR036390">
    <property type="entry name" value="WH_DNA-bd_sf"/>
</dbReference>
<dbReference type="PANTHER" id="PTHR10855:SF1">
    <property type="entry name" value="26S PROTEASOME NON-ATPASE REGULATORY SUBUNIT 12"/>
    <property type="match status" value="1"/>
</dbReference>
<dbReference type="PANTHER" id="PTHR10855">
    <property type="entry name" value="26S PROTEASOME NON-ATPASE REGULATORY SUBUNIT 12/COP9 SIGNALOSOME COMPLEX SUBUNIT 4"/>
    <property type="match status" value="1"/>
</dbReference>
<dbReference type="Pfam" id="PF01399">
    <property type="entry name" value="PCI"/>
    <property type="match status" value="1"/>
</dbReference>
<dbReference type="Pfam" id="PF22241">
    <property type="entry name" value="PSMD12-CSN4_N"/>
    <property type="match status" value="1"/>
</dbReference>
<dbReference type="Pfam" id="PF18098">
    <property type="entry name" value="RPN5_C"/>
    <property type="match status" value="1"/>
</dbReference>
<dbReference type="SMART" id="SM00088">
    <property type="entry name" value="PINT"/>
    <property type="match status" value="1"/>
</dbReference>
<dbReference type="SUPFAM" id="SSF46785">
    <property type="entry name" value="Winged helix' DNA-binding domain"/>
    <property type="match status" value="1"/>
</dbReference>
<dbReference type="PROSITE" id="PS50250">
    <property type="entry name" value="PCI"/>
    <property type="match status" value="1"/>
</dbReference>